<evidence type="ECO:0000255" key="1">
    <source>
        <dbReference type="HAMAP-Rule" id="MF_01365"/>
    </source>
</evidence>
<evidence type="ECO:0000305" key="2"/>
<gene>
    <name evidence="1" type="primary">rplF</name>
    <name type="ordered locus">SPO0500</name>
</gene>
<organism>
    <name type="scientific">Ruegeria pomeroyi (strain ATCC 700808 / DSM 15171 / DSS-3)</name>
    <name type="common">Silicibacter pomeroyi</name>
    <dbReference type="NCBI Taxonomy" id="246200"/>
    <lineage>
        <taxon>Bacteria</taxon>
        <taxon>Pseudomonadati</taxon>
        <taxon>Pseudomonadota</taxon>
        <taxon>Alphaproteobacteria</taxon>
        <taxon>Rhodobacterales</taxon>
        <taxon>Roseobacteraceae</taxon>
        <taxon>Ruegeria</taxon>
    </lineage>
</organism>
<name>RL6_RUEPO</name>
<accession>Q5LW43</accession>
<reference key="1">
    <citation type="journal article" date="2004" name="Nature">
        <title>Genome sequence of Silicibacter pomeroyi reveals adaptations to the marine environment.</title>
        <authorList>
            <person name="Moran M.A."/>
            <person name="Buchan A."/>
            <person name="Gonzalez J.M."/>
            <person name="Heidelberg J.F."/>
            <person name="Whitman W.B."/>
            <person name="Kiene R.P."/>
            <person name="Henriksen J.R."/>
            <person name="King G.M."/>
            <person name="Belas R."/>
            <person name="Fuqua C."/>
            <person name="Brinkac L.M."/>
            <person name="Lewis M."/>
            <person name="Johri S."/>
            <person name="Weaver B."/>
            <person name="Pai G."/>
            <person name="Eisen J.A."/>
            <person name="Rahe E."/>
            <person name="Sheldon W.M."/>
            <person name="Ye W."/>
            <person name="Miller T.R."/>
            <person name="Carlton J."/>
            <person name="Rasko D.A."/>
            <person name="Paulsen I.T."/>
            <person name="Ren Q."/>
            <person name="Daugherty S.C."/>
            <person name="DeBoy R.T."/>
            <person name="Dodson R.J."/>
            <person name="Durkin A.S."/>
            <person name="Madupu R."/>
            <person name="Nelson W.C."/>
            <person name="Sullivan S.A."/>
            <person name="Rosovitz M.J."/>
            <person name="Haft D.H."/>
            <person name="Selengut J."/>
            <person name="Ward N."/>
        </authorList>
    </citation>
    <scope>NUCLEOTIDE SEQUENCE [LARGE SCALE GENOMIC DNA]</scope>
    <source>
        <strain>ATCC 700808 / DSM 15171 / DSS-3</strain>
    </source>
</reference>
<reference key="2">
    <citation type="journal article" date="2014" name="Stand. Genomic Sci.">
        <title>An updated genome annotation for the model marine bacterium Ruegeria pomeroyi DSS-3.</title>
        <authorList>
            <person name="Rivers A.R."/>
            <person name="Smith C.B."/>
            <person name="Moran M.A."/>
        </authorList>
    </citation>
    <scope>GENOME REANNOTATION</scope>
    <source>
        <strain>ATCC 700808 / DSM 15171 / DSS-3</strain>
    </source>
</reference>
<keyword id="KW-1185">Reference proteome</keyword>
<keyword id="KW-0687">Ribonucleoprotein</keyword>
<keyword id="KW-0689">Ribosomal protein</keyword>
<keyword id="KW-0694">RNA-binding</keyword>
<keyword id="KW-0699">rRNA-binding</keyword>
<proteinExistence type="inferred from homology"/>
<comment type="function">
    <text evidence="1">This protein binds to the 23S rRNA, and is important in its secondary structure. It is located near the subunit interface in the base of the L7/L12 stalk, and near the tRNA binding site of the peptidyltransferase center.</text>
</comment>
<comment type="subunit">
    <text evidence="1">Part of the 50S ribosomal subunit.</text>
</comment>
<comment type="similarity">
    <text evidence="1">Belongs to the universal ribosomal protein uL6 family.</text>
</comment>
<protein>
    <recommendedName>
        <fullName evidence="1">Large ribosomal subunit protein uL6</fullName>
    </recommendedName>
    <alternativeName>
        <fullName evidence="2">50S ribosomal protein L6</fullName>
    </alternativeName>
</protein>
<feature type="chain" id="PRO_0000260934" description="Large ribosomal subunit protein uL6">
    <location>
        <begin position="1"/>
        <end position="177"/>
    </location>
</feature>
<dbReference type="EMBL" id="CP000031">
    <property type="protein sequence ID" value="AAV93817.1"/>
    <property type="molecule type" value="Genomic_DNA"/>
</dbReference>
<dbReference type="RefSeq" id="WP_011046259.1">
    <property type="nucleotide sequence ID" value="NC_003911.12"/>
</dbReference>
<dbReference type="SMR" id="Q5LW43"/>
<dbReference type="STRING" id="246200.SPO0500"/>
<dbReference type="PaxDb" id="246200-SPO0500"/>
<dbReference type="KEGG" id="sil:SPO0500"/>
<dbReference type="eggNOG" id="COG0097">
    <property type="taxonomic scope" value="Bacteria"/>
</dbReference>
<dbReference type="HOGENOM" id="CLU_065464_1_2_5"/>
<dbReference type="OrthoDB" id="9805007at2"/>
<dbReference type="Proteomes" id="UP000001023">
    <property type="component" value="Chromosome"/>
</dbReference>
<dbReference type="GO" id="GO:0022625">
    <property type="term" value="C:cytosolic large ribosomal subunit"/>
    <property type="evidence" value="ECO:0007669"/>
    <property type="project" value="TreeGrafter"/>
</dbReference>
<dbReference type="GO" id="GO:0019843">
    <property type="term" value="F:rRNA binding"/>
    <property type="evidence" value="ECO:0007669"/>
    <property type="project" value="UniProtKB-UniRule"/>
</dbReference>
<dbReference type="GO" id="GO:0003735">
    <property type="term" value="F:structural constituent of ribosome"/>
    <property type="evidence" value="ECO:0007669"/>
    <property type="project" value="InterPro"/>
</dbReference>
<dbReference type="GO" id="GO:0002181">
    <property type="term" value="P:cytoplasmic translation"/>
    <property type="evidence" value="ECO:0007669"/>
    <property type="project" value="TreeGrafter"/>
</dbReference>
<dbReference type="FunFam" id="3.90.930.12:FF:000001">
    <property type="entry name" value="50S ribosomal protein L6"/>
    <property type="match status" value="1"/>
</dbReference>
<dbReference type="Gene3D" id="3.90.930.12">
    <property type="entry name" value="Ribosomal protein L6, alpha-beta domain"/>
    <property type="match status" value="2"/>
</dbReference>
<dbReference type="HAMAP" id="MF_01365_B">
    <property type="entry name" value="Ribosomal_uL6_B"/>
    <property type="match status" value="1"/>
</dbReference>
<dbReference type="InterPro" id="IPR000702">
    <property type="entry name" value="Ribosomal_uL6-like"/>
</dbReference>
<dbReference type="InterPro" id="IPR036789">
    <property type="entry name" value="Ribosomal_uL6-like_a/b-dom_sf"/>
</dbReference>
<dbReference type="InterPro" id="IPR020040">
    <property type="entry name" value="Ribosomal_uL6_a/b-dom"/>
</dbReference>
<dbReference type="InterPro" id="IPR019906">
    <property type="entry name" value="Ribosomal_uL6_bac-type"/>
</dbReference>
<dbReference type="InterPro" id="IPR002358">
    <property type="entry name" value="Ribosomal_uL6_CS"/>
</dbReference>
<dbReference type="NCBIfam" id="TIGR03654">
    <property type="entry name" value="L6_bact"/>
    <property type="match status" value="1"/>
</dbReference>
<dbReference type="PANTHER" id="PTHR11655">
    <property type="entry name" value="60S/50S RIBOSOMAL PROTEIN L6/L9"/>
    <property type="match status" value="1"/>
</dbReference>
<dbReference type="PANTHER" id="PTHR11655:SF14">
    <property type="entry name" value="LARGE RIBOSOMAL SUBUNIT PROTEIN UL6M"/>
    <property type="match status" value="1"/>
</dbReference>
<dbReference type="Pfam" id="PF00347">
    <property type="entry name" value="Ribosomal_L6"/>
    <property type="match status" value="2"/>
</dbReference>
<dbReference type="PIRSF" id="PIRSF002162">
    <property type="entry name" value="Ribosomal_L6"/>
    <property type="match status" value="1"/>
</dbReference>
<dbReference type="PRINTS" id="PR00059">
    <property type="entry name" value="RIBOSOMALL6"/>
</dbReference>
<dbReference type="SUPFAM" id="SSF56053">
    <property type="entry name" value="Ribosomal protein L6"/>
    <property type="match status" value="2"/>
</dbReference>
<dbReference type="PROSITE" id="PS00525">
    <property type="entry name" value="RIBOSOMAL_L6_1"/>
    <property type="match status" value="1"/>
</dbReference>
<sequence length="177" mass="19154">MSRIGKKPVELPSGVSAAVSGQTIEVKGPKGARSFTATDDVTITVDGNVVSITPRGMSKRARQQWGMSRTMVANLVAGVTEGFKKELEITGVGYRANAQGNTLKLNLGYSHDVDFTVPAGVTVSTPKQTEIVVEGIDQQQVGEVAAKIREWRSPEPYKGKGIRYKGEFIFRKDGKKK</sequence>